<feature type="chain" id="PRO_1000074513" description="Alanine--tRNA ligase">
    <location>
        <begin position="1"/>
        <end position="892"/>
    </location>
</feature>
<feature type="binding site" evidence="1">
    <location>
        <position position="596"/>
    </location>
    <ligand>
        <name>Zn(2+)</name>
        <dbReference type="ChEBI" id="CHEBI:29105"/>
    </ligand>
</feature>
<feature type="binding site" evidence="1">
    <location>
        <position position="600"/>
    </location>
    <ligand>
        <name>Zn(2+)</name>
        <dbReference type="ChEBI" id="CHEBI:29105"/>
    </ligand>
</feature>
<feature type="binding site" evidence="1">
    <location>
        <position position="700"/>
    </location>
    <ligand>
        <name>Zn(2+)</name>
        <dbReference type="ChEBI" id="CHEBI:29105"/>
    </ligand>
</feature>
<feature type="binding site" evidence="1">
    <location>
        <position position="704"/>
    </location>
    <ligand>
        <name>Zn(2+)</name>
        <dbReference type="ChEBI" id="CHEBI:29105"/>
    </ligand>
</feature>
<name>SYA_METVS</name>
<reference key="1">
    <citation type="submission" date="2007-06" db="EMBL/GenBank/DDBJ databases">
        <title>Complete sequence of Methanococcus vannielii SB.</title>
        <authorList>
            <consortium name="US DOE Joint Genome Institute"/>
            <person name="Copeland A."/>
            <person name="Lucas S."/>
            <person name="Lapidus A."/>
            <person name="Barry K."/>
            <person name="Glavina del Rio T."/>
            <person name="Dalin E."/>
            <person name="Tice H."/>
            <person name="Pitluck S."/>
            <person name="Chain P."/>
            <person name="Malfatti S."/>
            <person name="Shin M."/>
            <person name="Vergez L."/>
            <person name="Schmutz J."/>
            <person name="Larimer F."/>
            <person name="Land M."/>
            <person name="Hauser L."/>
            <person name="Kyrpides N."/>
            <person name="Anderson I."/>
            <person name="Sieprawska-Lupa M."/>
            <person name="Whitman W.B."/>
            <person name="Richardson P."/>
        </authorList>
    </citation>
    <scope>NUCLEOTIDE SEQUENCE [LARGE SCALE GENOMIC DNA]</scope>
    <source>
        <strain>ATCC 35089 / DSM 1224 / JCM 13029 / OCM 148 / SB</strain>
    </source>
</reference>
<evidence type="ECO:0000255" key="1">
    <source>
        <dbReference type="HAMAP-Rule" id="MF_00036"/>
    </source>
</evidence>
<keyword id="KW-0030">Aminoacyl-tRNA synthetase</keyword>
<keyword id="KW-0067">ATP-binding</keyword>
<keyword id="KW-0963">Cytoplasm</keyword>
<keyword id="KW-0436">Ligase</keyword>
<keyword id="KW-0479">Metal-binding</keyword>
<keyword id="KW-0547">Nucleotide-binding</keyword>
<keyword id="KW-0648">Protein biosynthesis</keyword>
<keyword id="KW-0694">RNA-binding</keyword>
<keyword id="KW-0820">tRNA-binding</keyword>
<keyword id="KW-0862">Zinc</keyword>
<protein>
    <recommendedName>
        <fullName evidence="1">Alanine--tRNA ligase</fullName>
        <ecNumber evidence="1">6.1.1.7</ecNumber>
    </recommendedName>
    <alternativeName>
        <fullName evidence="1">Alanyl-tRNA synthetase</fullName>
        <shortName evidence="1">AlaRS</shortName>
    </alternativeName>
</protein>
<gene>
    <name evidence="1" type="primary">alaS</name>
    <name type="ordered locus">Mevan_1384</name>
</gene>
<dbReference type="EC" id="6.1.1.7" evidence="1"/>
<dbReference type="EMBL" id="CP000742">
    <property type="protein sequence ID" value="ABR55281.1"/>
    <property type="molecule type" value="Genomic_DNA"/>
</dbReference>
<dbReference type="RefSeq" id="WP_012066195.1">
    <property type="nucleotide sequence ID" value="NC_009634.1"/>
</dbReference>
<dbReference type="SMR" id="A6US09"/>
<dbReference type="STRING" id="406327.Mevan_1384"/>
<dbReference type="GeneID" id="5324766"/>
<dbReference type="KEGG" id="mvn:Mevan_1384"/>
<dbReference type="eggNOG" id="arCOG01255">
    <property type="taxonomic scope" value="Archaea"/>
</dbReference>
<dbReference type="HOGENOM" id="CLU_004485_4_0_2"/>
<dbReference type="OrthoDB" id="7506at2157"/>
<dbReference type="Proteomes" id="UP000001107">
    <property type="component" value="Chromosome"/>
</dbReference>
<dbReference type="GO" id="GO:0005737">
    <property type="term" value="C:cytoplasm"/>
    <property type="evidence" value="ECO:0007669"/>
    <property type="project" value="UniProtKB-SubCell"/>
</dbReference>
<dbReference type="GO" id="GO:0004813">
    <property type="term" value="F:alanine-tRNA ligase activity"/>
    <property type="evidence" value="ECO:0007669"/>
    <property type="project" value="UniProtKB-UniRule"/>
</dbReference>
<dbReference type="GO" id="GO:0002161">
    <property type="term" value="F:aminoacyl-tRNA deacylase activity"/>
    <property type="evidence" value="ECO:0007669"/>
    <property type="project" value="TreeGrafter"/>
</dbReference>
<dbReference type="GO" id="GO:0005524">
    <property type="term" value="F:ATP binding"/>
    <property type="evidence" value="ECO:0007669"/>
    <property type="project" value="UniProtKB-UniRule"/>
</dbReference>
<dbReference type="GO" id="GO:0000049">
    <property type="term" value="F:tRNA binding"/>
    <property type="evidence" value="ECO:0007669"/>
    <property type="project" value="UniProtKB-KW"/>
</dbReference>
<dbReference type="GO" id="GO:0008270">
    <property type="term" value="F:zinc ion binding"/>
    <property type="evidence" value="ECO:0007669"/>
    <property type="project" value="UniProtKB-UniRule"/>
</dbReference>
<dbReference type="GO" id="GO:0006419">
    <property type="term" value="P:alanyl-tRNA aminoacylation"/>
    <property type="evidence" value="ECO:0007669"/>
    <property type="project" value="UniProtKB-UniRule"/>
</dbReference>
<dbReference type="CDD" id="cd00673">
    <property type="entry name" value="AlaRS_core"/>
    <property type="match status" value="1"/>
</dbReference>
<dbReference type="FunFam" id="3.30.54.20:FF:000005">
    <property type="entry name" value="Alanine--tRNA ligase"/>
    <property type="match status" value="1"/>
</dbReference>
<dbReference type="FunFam" id="3.30.930.10:FF:000056">
    <property type="entry name" value="Alanine--tRNA ligase"/>
    <property type="match status" value="1"/>
</dbReference>
<dbReference type="FunFam" id="3.30.980.10:FF:000004">
    <property type="entry name" value="Alanine--tRNA ligase, cytoplasmic"/>
    <property type="match status" value="1"/>
</dbReference>
<dbReference type="Gene3D" id="2.40.30.130">
    <property type="match status" value="1"/>
</dbReference>
<dbReference type="Gene3D" id="3.10.310.40">
    <property type="match status" value="1"/>
</dbReference>
<dbReference type="Gene3D" id="3.30.54.20">
    <property type="match status" value="1"/>
</dbReference>
<dbReference type="Gene3D" id="6.10.250.550">
    <property type="match status" value="1"/>
</dbReference>
<dbReference type="Gene3D" id="3.30.930.10">
    <property type="entry name" value="Bira Bifunctional Protein, Domain 2"/>
    <property type="match status" value="1"/>
</dbReference>
<dbReference type="Gene3D" id="3.30.980.10">
    <property type="entry name" value="Threonyl-trna Synthetase, Chain A, domain 2"/>
    <property type="match status" value="1"/>
</dbReference>
<dbReference type="HAMAP" id="MF_00036_A">
    <property type="entry name" value="Ala_tRNA_synth_A"/>
    <property type="match status" value="1"/>
</dbReference>
<dbReference type="InterPro" id="IPR045864">
    <property type="entry name" value="aa-tRNA-synth_II/BPL/LPL"/>
</dbReference>
<dbReference type="InterPro" id="IPR002318">
    <property type="entry name" value="Ala-tRNA-lgiase_IIc"/>
</dbReference>
<dbReference type="InterPro" id="IPR018162">
    <property type="entry name" value="Ala-tRNA-ligase_IIc_anticod-bd"/>
</dbReference>
<dbReference type="InterPro" id="IPR018165">
    <property type="entry name" value="Ala-tRNA-synth_IIc_core"/>
</dbReference>
<dbReference type="InterPro" id="IPR018164">
    <property type="entry name" value="Ala-tRNA-synth_IIc_N"/>
</dbReference>
<dbReference type="InterPro" id="IPR022429">
    <property type="entry name" value="Ala-tRNA_lgiase_arc"/>
</dbReference>
<dbReference type="InterPro" id="IPR050058">
    <property type="entry name" value="Ala-tRNA_ligase"/>
</dbReference>
<dbReference type="InterPro" id="IPR018163">
    <property type="entry name" value="Thr/Ala-tRNA-synth_IIc_edit"/>
</dbReference>
<dbReference type="InterPro" id="IPR009000">
    <property type="entry name" value="Transl_B-barrel_sf"/>
</dbReference>
<dbReference type="InterPro" id="IPR012947">
    <property type="entry name" value="tRNA_SAD"/>
</dbReference>
<dbReference type="NCBIfam" id="TIGR03683">
    <property type="entry name" value="A-tRNA_syn_arch"/>
    <property type="match status" value="1"/>
</dbReference>
<dbReference type="NCBIfam" id="TIGR00344">
    <property type="entry name" value="alaS"/>
    <property type="match status" value="1"/>
</dbReference>
<dbReference type="PANTHER" id="PTHR11777:SF9">
    <property type="entry name" value="ALANINE--TRNA LIGASE, CYTOPLASMIC"/>
    <property type="match status" value="1"/>
</dbReference>
<dbReference type="PANTHER" id="PTHR11777">
    <property type="entry name" value="ALANYL-TRNA SYNTHETASE"/>
    <property type="match status" value="1"/>
</dbReference>
<dbReference type="Pfam" id="PF01411">
    <property type="entry name" value="tRNA-synt_2c"/>
    <property type="match status" value="1"/>
</dbReference>
<dbReference type="Pfam" id="PF07973">
    <property type="entry name" value="tRNA_SAD"/>
    <property type="match status" value="1"/>
</dbReference>
<dbReference type="PRINTS" id="PR00980">
    <property type="entry name" value="TRNASYNTHALA"/>
</dbReference>
<dbReference type="SMART" id="SM00863">
    <property type="entry name" value="tRNA_SAD"/>
    <property type="match status" value="1"/>
</dbReference>
<dbReference type="SUPFAM" id="SSF55681">
    <property type="entry name" value="Class II aaRS and biotin synthetases"/>
    <property type="match status" value="1"/>
</dbReference>
<dbReference type="SUPFAM" id="SSF101353">
    <property type="entry name" value="Putative anticodon-binding domain of alanyl-tRNA synthetase (AlaRS)"/>
    <property type="match status" value="1"/>
</dbReference>
<dbReference type="SUPFAM" id="SSF55186">
    <property type="entry name" value="ThrRS/AlaRS common domain"/>
    <property type="match status" value="1"/>
</dbReference>
<dbReference type="SUPFAM" id="SSF50447">
    <property type="entry name" value="Translation proteins"/>
    <property type="match status" value="1"/>
</dbReference>
<dbReference type="PROSITE" id="PS50860">
    <property type="entry name" value="AA_TRNA_LIGASE_II_ALA"/>
    <property type="match status" value="1"/>
</dbReference>
<organism>
    <name type="scientific">Methanococcus vannielii (strain ATCC 35089 / DSM 1224 / JCM 13029 / OCM 148 / SB)</name>
    <dbReference type="NCBI Taxonomy" id="406327"/>
    <lineage>
        <taxon>Archaea</taxon>
        <taxon>Methanobacteriati</taxon>
        <taxon>Methanobacteriota</taxon>
        <taxon>Methanomada group</taxon>
        <taxon>Methanococci</taxon>
        <taxon>Methanococcales</taxon>
        <taxon>Methanococcaceae</taxon>
        <taxon>Methanococcus</taxon>
    </lineage>
</organism>
<sequence length="892" mass="101699">MEITHDYKVKLFEEMNFERKQCSECKQWFWTLDKERITCGDSPCDKYSFIGNPITTKKYTYNEMVKEFTNFFDERGHSPVKRSPVIAKRWRDDILLTIASIAVFQPWVTNGLVKPVKNPLVITQPCIRLNDIDNVGRTGRHLTCFTMGAHHAFNSKDEYKYWTDKTVELCFELMQKLGIDGHTITFIESWWEGGGNAGPCYEVITHGVELATLVFMQYKKVGNNYEEIPLKIVDTGYGIERFAWASQGTPTVYEALFSDIIEKLKKNANIPIVDEKIMAESATLAGLMDIENVGDLKALRQKVAEKIGMDVNELDRLISPLEYIYAISDHTRCLSFMFGDGIVPSNVKEGYLARLVLRKTLRYMEKVGISYSIKEIILMQLESMKEVYPELIGMKDYIMDVLDSEEKKYIQTVNKGRGIVERMTKLKSEITLNDLINLYDSNGLPPEIVKDIIDEINKTSKTKISIHVPDNFYTIVAERHEEEKAEEVAILKHELPELDLPKTELLFFKNTMQSEFEAKVLKIVDKYIILDRTVFYAEGGGQKYDIGQISGVDVVDVQKKNGIVFHKVLDISKFKEGNLVKGELNFENRLKLMRNHTATHVINAALKQVLGKHVWQTGSNVDTEKGRLDVTHYERISRKEIKEIEKIANEIVLLGKPVTCKFMDRNDAEQEYGFKIYQGGVVPGDTLRIVEIDGIDVEACGGTHVTNTSEIGYIKVLKTERIQDGVERLEYSTGMGSIFEIAALEDILLDSAEVLGVPIENLPKTAKRFFEEWKEQKKVIEELQKKVGELLKYELLEKFEKVGNLEILVEKVSGTSNELMAIADNLATNGKIVILMNDTDYILCKKGENVEISMKELIQKIGKGGGKENLAQGKYSTSKEQIREKAFELLKQ</sequence>
<comment type="function">
    <text evidence="1">Catalyzes the attachment of alanine to tRNA(Ala) in a two-step reaction: alanine is first activated by ATP to form Ala-AMP and then transferred to the acceptor end of tRNA(Ala). Also edits incorrectly charged Ser-tRNA(Ala) and Gly-tRNA(Ala) via its editing domain.</text>
</comment>
<comment type="catalytic activity">
    <reaction evidence="1">
        <text>tRNA(Ala) + L-alanine + ATP = L-alanyl-tRNA(Ala) + AMP + diphosphate</text>
        <dbReference type="Rhea" id="RHEA:12540"/>
        <dbReference type="Rhea" id="RHEA-COMP:9657"/>
        <dbReference type="Rhea" id="RHEA-COMP:9923"/>
        <dbReference type="ChEBI" id="CHEBI:30616"/>
        <dbReference type="ChEBI" id="CHEBI:33019"/>
        <dbReference type="ChEBI" id="CHEBI:57972"/>
        <dbReference type="ChEBI" id="CHEBI:78442"/>
        <dbReference type="ChEBI" id="CHEBI:78497"/>
        <dbReference type="ChEBI" id="CHEBI:456215"/>
        <dbReference type="EC" id="6.1.1.7"/>
    </reaction>
</comment>
<comment type="cofactor">
    <cofactor evidence="1">
        <name>Zn(2+)</name>
        <dbReference type="ChEBI" id="CHEBI:29105"/>
    </cofactor>
    <text evidence="1">Binds 1 zinc ion per subunit.</text>
</comment>
<comment type="subcellular location">
    <subcellularLocation>
        <location evidence="1">Cytoplasm</location>
    </subcellularLocation>
</comment>
<comment type="domain">
    <text evidence="1">Consists of three domains; the N-terminal catalytic domain, the editing domain and the C-terminal C-Ala domain. The editing domain removes incorrectly charged amino acids, while the C-Ala domain, along with tRNA(Ala), serves as a bridge to cooperatively bring together the editing and aminoacylation centers thus stimulating deacylation of misacylated tRNAs.</text>
</comment>
<comment type="similarity">
    <text evidence="1">Belongs to the class-II aminoacyl-tRNA synthetase family.</text>
</comment>
<proteinExistence type="inferred from homology"/>
<accession>A6US09</accession>